<proteinExistence type="inferred from homology"/>
<name>GLMM1_SHEAM</name>
<protein>
    <recommendedName>
        <fullName evidence="1">Phosphoglucosamine mutase 1</fullName>
        <ecNumber evidence="1">5.4.2.10</ecNumber>
    </recommendedName>
</protein>
<reference key="1">
    <citation type="submission" date="2006-12" db="EMBL/GenBank/DDBJ databases">
        <title>Complete sequence of Shewanella amazonensis SB2B.</title>
        <authorList>
            <consortium name="US DOE Joint Genome Institute"/>
            <person name="Copeland A."/>
            <person name="Lucas S."/>
            <person name="Lapidus A."/>
            <person name="Barry K."/>
            <person name="Detter J.C."/>
            <person name="Glavina del Rio T."/>
            <person name="Hammon N."/>
            <person name="Israni S."/>
            <person name="Dalin E."/>
            <person name="Tice H."/>
            <person name="Pitluck S."/>
            <person name="Munk A.C."/>
            <person name="Brettin T."/>
            <person name="Bruce D."/>
            <person name="Han C."/>
            <person name="Tapia R."/>
            <person name="Gilna P."/>
            <person name="Schmutz J."/>
            <person name="Larimer F."/>
            <person name="Land M."/>
            <person name="Hauser L."/>
            <person name="Kyrpides N."/>
            <person name="Mikhailova N."/>
            <person name="Fredrickson J."/>
            <person name="Richardson P."/>
        </authorList>
    </citation>
    <scope>NUCLEOTIDE SEQUENCE [LARGE SCALE GENOMIC DNA]</scope>
    <source>
        <strain>ATCC BAA-1098 / SB2B</strain>
    </source>
</reference>
<gene>
    <name evidence="1" type="primary">glmM1</name>
    <name type="ordered locus">Sama_0956</name>
</gene>
<sequence>MSQRKFFGTDGIRGKVGADQMTPELALKLGWAAGRVLARTGTKKVIIGKDTRISGYMFESALEAGFSSAGLNVLLMGPMPTPAVAYLTRTFRAEAGVVISASHNPYYDNGIKFFSNDGSKLDDEIELAIEAELEKPLICAESQFLGKVSRIDDARGRYIEYCKGNFPADQTLSGLKIVVDCAHGATYHIAPAVFRELGAEVVAIGVEPNGMNINDKCGATSMGAIRDKVLEVNADLGIALDGDGDRIMMVTQEGDIIDGDQILYILALDAKERGLLKGGVVGTQMANLGLELALKDEGIPFARSKVGDRYVMELLKELGWRIGGENSGHILNLDHGTTGDGIVAGILVLAAMRRSGKGLQQLIAKLKMFPQVLVNVRFEGDKNPLEADTVTAKVAEVERELGERGRVLLRKSGTEPLLRVMVEGEDKETVTRLANAIADAVKAAT</sequence>
<comment type="function">
    <text evidence="1">Catalyzes the conversion of glucosamine-6-phosphate to glucosamine-1-phosphate.</text>
</comment>
<comment type="catalytic activity">
    <reaction evidence="1">
        <text>alpha-D-glucosamine 1-phosphate = D-glucosamine 6-phosphate</text>
        <dbReference type="Rhea" id="RHEA:23424"/>
        <dbReference type="ChEBI" id="CHEBI:58516"/>
        <dbReference type="ChEBI" id="CHEBI:58725"/>
        <dbReference type="EC" id="5.4.2.10"/>
    </reaction>
</comment>
<comment type="cofactor">
    <cofactor evidence="1">
        <name>Mg(2+)</name>
        <dbReference type="ChEBI" id="CHEBI:18420"/>
    </cofactor>
    <text evidence="1">Binds 1 Mg(2+) ion per subunit.</text>
</comment>
<comment type="PTM">
    <text evidence="1">Activated by phosphorylation.</text>
</comment>
<comment type="similarity">
    <text evidence="1">Belongs to the phosphohexose mutase family.</text>
</comment>
<organism>
    <name type="scientific">Shewanella amazonensis (strain ATCC BAA-1098 / SB2B)</name>
    <dbReference type="NCBI Taxonomy" id="326297"/>
    <lineage>
        <taxon>Bacteria</taxon>
        <taxon>Pseudomonadati</taxon>
        <taxon>Pseudomonadota</taxon>
        <taxon>Gammaproteobacteria</taxon>
        <taxon>Alteromonadales</taxon>
        <taxon>Shewanellaceae</taxon>
        <taxon>Shewanella</taxon>
    </lineage>
</organism>
<accession>A1S457</accession>
<keyword id="KW-0413">Isomerase</keyword>
<keyword id="KW-0460">Magnesium</keyword>
<keyword id="KW-0479">Metal-binding</keyword>
<keyword id="KW-0597">Phosphoprotein</keyword>
<keyword id="KW-1185">Reference proteome</keyword>
<feature type="chain" id="PRO_0000305670" description="Phosphoglucosamine mutase 1">
    <location>
        <begin position="1"/>
        <end position="445"/>
    </location>
</feature>
<feature type="active site" description="Phosphoserine intermediate" evidence="1">
    <location>
        <position position="102"/>
    </location>
</feature>
<feature type="binding site" description="via phosphate group" evidence="1">
    <location>
        <position position="102"/>
    </location>
    <ligand>
        <name>Mg(2+)</name>
        <dbReference type="ChEBI" id="CHEBI:18420"/>
    </ligand>
</feature>
<feature type="binding site" evidence="1">
    <location>
        <position position="241"/>
    </location>
    <ligand>
        <name>Mg(2+)</name>
        <dbReference type="ChEBI" id="CHEBI:18420"/>
    </ligand>
</feature>
<feature type="binding site" evidence="1">
    <location>
        <position position="243"/>
    </location>
    <ligand>
        <name>Mg(2+)</name>
        <dbReference type="ChEBI" id="CHEBI:18420"/>
    </ligand>
</feature>
<feature type="binding site" evidence="1">
    <location>
        <position position="245"/>
    </location>
    <ligand>
        <name>Mg(2+)</name>
        <dbReference type="ChEBI" id="CHEBI:18420"/>
    </ligand>
</feature>
<feature type="modified residue" description="Phosphoserine" evidence="1">
    <location>
        <position position="102"/>
    </location>
</feature>
<dbReference type="EC" id="5.4.2.10" evidence="1"/>
<dbReference type="EMBL" id="CP000507">
    <property type="protein sequence ID" value="ABL99163.1"/>
    <property type="molecule type" value="Genomic_DNA"/>
</dbReference>
<dbReference type="RefSeq" id="WP_011759072.1">
    <property type="nucleotide sequence ID" value="NC_008700.1"/>
</dbReference>
<dbReference type="SMR" id="A1S457"/>
<dbReference type="STRING" id="326297.Sama_0956"/>
<dbReference type="KEGG" id="saz:Sama_0956"/>
<dbReference type="eggNOG" id="COG1109">
    <property type="taxonomic scope" value="Bacteria"/>
</dbReference>
<dbReference type="HOGENOM" id="CLU_016950_7_0_6"/>
<dbReference type="OrthoDB" id="9803322at2"/>
<dbReference type="Proteomes" id="UP000009175">
    <property type="component" value="Chromosome"/>
</dbReference>
<dbReference type="GO" id="GO:0005829">
    <property type="term" value="C:cytosol"/>
    <property type="evidence" value="ECO:0007669"/>
    <property type="project" value="TreeGrafter"/>
</dbReference>
<dbReference type="GO" id="GO:0000287">
    <property type="term" value="F:magnesium ion binding"/>
    <property type="evidence" value="ECO:0007669"/>
    <property type="project" value="UniProtKB-UniRule"/>
</dbReference>
<dbReference type="GO" id="GO:0008966">
    <property type="term" value="F:phosphoglucosamine mutase activity"/>
    <property type="evidence" value="ECO:0007669"/>
    <property type="project" value="UniProtKB-UniRule"/>
</dbReference>
<dbReference type="GO" id="GO:0004615">
    <property type="term" value="F:phosphomannomutase activity"/>
    <property type="evidence" value="ECO:0007669"/>
    <property type="project" value="TreeGrafter"/>
</dbReference>
<dbReference type="GO" id="GO:0005975">
    <property type="term" value="P:carbohydrate metabolic process"/>
    <property type="evidence" value="ECO:0007669"/>
    <property type="project" value="InterPro"/>
</dbReference>
<dbReference type="GO" id="GO:0009252">
    <property type="term" value="P:peptidoglycan biosynthetic process"/>
    <property type="evidence" value="ECO:0007669"/>
    <property type="project" value="TreeGrafter"/>
</dbReference>
<dbReference type="GO" id="GO:0006048">
    <property type="term" value="P:UDP-N-acetylglucosamine biosynthetic process"/>
    <property type="evidence" value="ECO:0007669"/>
    <property type="project" value="TreeGrafter"/>
</dbReference>
<dbReference type="CDD" id="cd05802">
    <property type="entry name" value="GlmM"/>
    <property type="match status" value="1"/>
</dbReference>
<dbReference type="FunFam" id="3.30.310.50:FF:000001">
    <property type="entry name" value="Phosphoglucosamine mutase"/>
    <property type="match status" value="1"/>
</dbReference>
<dbReference type="FunFam" id="3.40.120.10:FF:000001">
    <property type="entry name" value="Phosphoglucosamine mutase"/>
    <property type="match status" value="1"/>
</dbReference>
<dbReference type="FunFam" id="3.40.120.10:FF:000003">
    <property type="entry name" value="Phosphoglucosamine mutase"/>
    <property type="match status" value="1"/>
</dbReference>
<dbReference type="Gene3D" id="3.40.120.10">
    <property type="entry name" value="Alpha-D-Glucose-1,6-Bisphosphate, subunit A, domain 3"/>
    <property type="match status" value="3"/>
</dbReference>
<dbReference type="Gene3D" id="3.30.310.50">
    <property type="entry name" value="Alpha-D-phosphohexomutase, C-terminal domain"/>
    <property type="match status" value="1"/>
</dbReference>
<dbReference type="HAMAP" id="MF_01554_B">
    <property type="entry name" value="GlmM_B"/>
    <property type="match status" value="1"/>
</dbReference>
<dbReference type="InterPro" id="IPR005844">
    <property type="entry name" value="A-D-PHexomutase_a/b/a-I"/>
</dbReference>
<dbReference type="InterPro" id="IPR016055">
    <property type="entry name" value="A-D-PHexomutase_a/b/a-I/II/III"/>
</dbReference>
<dbReference type="InterPro" id="IPR005845">
    <property type="entry name" value="A-D-PHexomutase_a/b/a-II"/>
</dbReference>
<dbReference type="InterPro" id="IPR005846">
    <property type="entry name" value="A-D-PHexomutase_a/b/a-III"/>
</dbReference>
<dbReference type="InterPro" id="IPR005843">
    <property type="entry name" value="A-D-PHexomutase_C"/>
</dbReference>
<dbReference type="InterPro" id="IPR036900">
    <property type="entry name" value="A-D-PHexomutase_C_sf"/>
</dbReference>
<dbReference type="InterPro" id="IPR016066">
    <property type="entry name" value="A-D-PHexomutase_CS"/>
</dbReference>
<dbReference type="InterPro" id="IPR005841">
    <property type="entry name" value="Alpha-D-phosphohexomutase_SF"/>
</dbReference>
<dbReference type="InterPro" id="IPR006352">
    <property type="entry name" value="GlmM_bact"/>
</dbReference>
<dbReference type="InterPro" id="IPR050060">
    <property type="entry name" value="Phosphoglucosamine_mutase"/>
</dbReference>
<dbReference type="NCBIfam" id="TIGR01455">
    <property type="entry name" value="glmM"/>
    <property type="match status" value="1"/>
</dbReference>
<dbReference type="NCBIfam" id="NF008139">
    <property type="entry name" value="PRK10887.1"/>
    <property type="match status" value="1"/>
</dbReference>
<dbReference type="PANTHER" id="PTHR42946:SF1">
    <property type="entry name" value="PHOSPHOGLUCOMUTASE (ALPHA-D-GLUCOSE-1,6-BISPHOSPHATE-DEPENDENT)"/>
    <property type="match status" value="1"/>
</dbReference>
<dbReference type="PANTHER" id="PTHR42946">
    <property type="entry name" value="PHOSPHOHEXOSE MUTASE"/>
    <property type="match status" value="1"/>
</dbReference>
<dbReference type="Pfam" id="PF02878">
    <property type="entry name" value="PGM_PMM_I"/>
    <property type="match status" value="1"/>
</dbReference>
<dbReference type="Pfam" id="PF02879">
    <property type="entry name" value="PGM_PMM_II"/>
    <property type="match status" value="1"/>
</dbReference>
<dbReference type="Pfam" id="PF02880">
    <property type="entry name" value="PGM_PMM_III"/>
    <property type="match status" value="1"/>
</dbReference>
<dbReference type="Pfam" id="PF00408">
    <property type="entry name" value="PGM_PMM_IV"/>
    <property type="match status" value="1"/>
</dbReference>
<dbReference type="PRINTS" id="PR00509">
    <property type="entry name" value="PGMPMM"/>
</dbReference>
<dbReference type="SUPFAM" id="SSF55957">
    <property type="entry name" value="Phosphoglucomutase, C-terminal domain"/>
    <property type="match status" value="1"/>
</dbReference>
<dbReference type="SUPFAM" id="SSF53738">
    <property type="entry name" value="Phosphoglucomutase, first 3 domains"/>
    <property type="match status" value="3"/>
</dbReference>
<dbReference type="PROSITE" id="PS00710">
    <property type="entry name" value="PGM_PMM"/>
    <property type="match status" value="1"/>
</dbReference>
<evidence type="ECO:0000255" key="1">
    <source>
        <dbReference type="HAMAP-Rule" id="MF_01554"/>
    </source>
</evidence>